<name>GON1_XENLA</name>
<accession>P45656</accession>
<proteinExistence type="evidence at protein level"/>
<evidence type="ECO:0000250" key="1">
    <source>
        <dbReference type="UniProtKB" id="P01148"/>
    </source>
</evidence>
<evidence type="ECO:0000269" key="2">
    <source>
    </source>
</evidence>
<evidence type="ECO:0000305" key="3"/>
<reference key="1">
    <citation type="journal article" date="1994" name="Endocrinology">
        <title>The frog gonadotropin-releasing hormone-I (GnRH-I) gene has a mammalian-like expression pattern and conserved domains in GnRH-associated peptide, but brain onset is delayed until metamorphosis.</title>
        <authorList>
            <person name="Hayes W.P."/>
            <person name="Wray S."/>
            <person name="Battey J.F."/>
        </authorList>
    </citation>
    <scope>NUCLEOTIDE SEQUENCE [GENOMIC DNA]</scope>
    <scope>AMIDATION AT GLY-33</scope>
    <scope>TISSUE SPECIFICITY</scope>
    <scope>DEVELOPMENTAL STAGE</scope>
    <source>
        <tissue>Forebrain</tissue>
    </source>
</reference>
<protein>
    <recommendedName>
        <fullName>Progonadoliberin-1</fullName>
    </recommendedName>
    <alternativeName>
        <fullName>Progonadoliberin I</fullName>
    </alternativeName>
    <component>
        <recommendedName>
            <fullName>Gonadoliberin-1</fullName>
        </recommendedName>
        <alternativeName>
            <fullName>Gonadoliberin I</fullName>
        </alternativeName>
        <alternativeName>
            <fullName>Gonadotropin-releasing hormone I</fullName>
            <shortName>GnRH-I</shortName>
        </alternativeName>
        <alternativeName>
            <fullName>Luliberin I</fullName>
        </alternativeName>
        <alternativeName>
            <fullName>Luteinizing hormone-releasing hormone I</fullName>
            <shortName>LH-RH I</shortName>
        </alternativeName>
    </component>
    <component>
        <recommendedName>
            <fullName>Gonadotropin-releasing hormone-associated peptide</fullName>
        </recommendedName>
    </component>
    <component>
        <recommendedName>
            <fullName>GnRH-associated peptide 1</fullName>
        </recommendedName>
        <alternativeName>
            <fullName>GnRH-associated peptide I</fullName>
        </alternativeName>
    </component>
</protein>
<comment type="function">
    <text>Stimulates the secretion of gonadotropins.</text>
</comment>
<comment type="subcellular location">
    <subcellularLocation>
        <location>Secreted</location>
    </subcellularLocation>
</comment>
<comment type="tissue specificity">
    <text evidence="2">Expressed in the forebrain from larval stages.</text>
</comment>
<comment type="developmental stage">
    <text evidence="2">First expressed in late larvae (stages 62-64). Also expressed in adults.</text>
</comment>
<comment type="similarity">
    <text evidence="3">Belongs to the GnRH family.</text>
</comment>
<sequence>MKAFPTFALLFLVLLFSAHVSDAQHWSYGLRPGGKRDTESLQDMYHETPNEVALFPELERLECSVPQSRLNVLRGALMNWLEGENRKKI</sequence>
<keyword id="KW-0027">Amidation</keyword>
<keyword id="KW-0165">Cleavage on pair of basic residues</keyword>
<keyword id="KW-0372">Hormone</keyword>
<keyword id="KW-0873">Pyrrolidone carboxylic acid</keyword>
<keyword id="KW-1185">Reference proteome</keyword>
<keyword id="KW-0964">Secreted</keyword>
<keyword id="KW-0732">Signal</keyword>
<feature type="signal peptide">
    <location>
        <begin position="1"/>
        <end position="23"/>
    </location>
</feature>
<feature type="chain" id="PRO_0000012422" description="Progonadoliberin-1">
    <location>
        <begin position="24"/>
        <end position="89"/>
    </location>
</feature>
<feature type="peptide" id="PRO_0000012423" description="Gonadoliberin-1">
    <location>
        <begin position="24"/>
        <end position="33"/>
    </location>
</feature>
<feature type="peptide" id="PRO_0000012424" description="Gonadotropin-releasing hormone-associated peptide">
    <location>
        <begin position="37"/>
        <end position="89"/>
    </location>
</feature>
<feature type="peptide" id="PRO_0000012425" description="GnRH-associated peptide 1">
    <location>
        <begin position="37"/>
        <end position="85"/>
    </location>
</feature>
<feature type="modified residue" description="Pyrrolidone carboxylic acid" evidence="1">
    <location>
        <position position="24"/>
    </location>
</feature>
<feature type="modified residue" description="Glycine amide" evidence="2">
    <location>
        <position position="33"/>
    </location>
</feature>
<dbReference type="EMBL" id="L28040">
    <property type="protein sequence ID" value="AAA49728.1"/>
    <property type="molecule type" value="Genomic_DNA"/>
</dbReference>
<dbReference type="PIR" id="I51423">
    <property type="entry name" value="I51423"/>
</dbReference>
<dbReference type="RefSeq" id="XP_018107225.1">
    <property type="nucleotide sequence ID" value="XM_018251736.1"/>
</dbReference>
<dbReference type="AGR" id="Xenbase:XB-GENE-6500232"/>
<dbReference type="Xenbase" id="XB-GENE-6500232">
    <property type="gene designation" value="gnrh1.L"/>
</dbReference>
<dbReference type="OMA" id="FECTVHQ"/>
<dbReference type="OrthoDB" id="8716567at2759"/>
<dbReference type="Proteomes" id="UP000186698">
    <property type="component" value="Unplaced"/>
</dbReference>
<dbReference type="Bgee" id="108710621">
    <property type="expression patterns" value="Expressed in brain and 10 other cell types or tissues"/>
</dbReference>
<dbReference type="GO" id="GO:0005615">
    <property type="term" value="C:extracellular space"/>
    <property type="evidence" value="ECO:0000250"/>
    <property type="project" value="UniProtKB"/>
</dbReference>
<dbReference type="GO" id="GO:0005183">
    <property type="term" value="F:gonadotropin hormone-releasing hormone activity"/>
    <property type="evidence" value="ECO:0007669"/>
    <property type="project" value="InterPro"/>
</dbReference>
<dbReference type="GO" id="GO:0031530">
    <property type="term" value="F:gonadotropin-releasing hormone receptor binding"/>
    <property type="evidence" value="ECO:0007669"/>
    <property type="project" value="TreeGrafter"/>
</dbReference>
<dbReference type="InterPro" id="IPR002012">
    <property type="entry name" value="GnRH"/>
</dbReference>
<dbReference type="InterPro" id="IPR019792">
    <property type="entry name" value="Gonadoliberin"/>
</dbReference>
<dbReference type="InterPro" id="IPR004079">
    <property type="entry name" value="Gonadoliberin_I_precursor"/>
</dbReference>
<dbReference type="PANTHER" id="PTHR10522">
    <property type="entry name" value="GONADOLIBERIN"/>
    <property type="match status" value="1"/>
</dbReference>
<dbReference type="PANTHER" id="PTHR10522:SF0">
    <property type="entry name" value="PROGONADOLIBERIN-1"/>
    <property type="match status" value="1"/>
</dbReference>
<dbReference type="Pfam" id="PF00446">
    <property type="entry name" value="GnRH"/>
    <property type="match status" value="1"/>
</dbReference>
<dbReference type="PRINTS" id="PR01541">
    <property type="entry name" value="GONADOLIBRNI"/>
</dbReference>
<dbReference type="PROSITE" id="PS00473">
    <property type="entry name" value="GNRH"/>
    <property type="match status" value="1"/>
</dbReference>
<organism>
    <name type="scientific">Xenopus laevis</name>
    <name type="common">African clawed frog</name>
    <dbReference type="NCBI Taxonomy" id="8355"/>
    <lineage>
        <taxon>Eukaryota</taxon>
        <taxon>Metazoa</taxon>
        <taxon>Chordata</taxon>
        <taxon>Craniata</taxon>
        <taxon>Vertebrata</taxon>
        <taxon>Euteleostomi</taxon>
        <taxon>Amphibia</taxon>
        <taxon>Batrachia</taxon>
        <taxon>Anura</taxon>
        <taxon>Pipoidea</taxon>
        <taxon>Pipidae</taxon>
        <taxon>Xenopodinae</taxon>
        <taxon>Xenopus</taxon>
        <taxon>Xenopus</taxon>
    </lineage>
</organism>
<gene>
    <name type="primary">gnrh1</name>
</gene>